<reference key="1">
    <citation type="journal article" date="2005" name="J. Bacteriol.">
        <title>Completion of the genome sequence of Brucella abortus and comparison to the highly similar genomes of Brucella melitensis and Brucella suis.</title>
        <authorList>
            <person name="Halling S.M."/>
            <person name="Peterson-Burch B.D."/>
            <person name="Bricker B.J."/>
            <person name="Zuerner R.L."/>
            <person name="Qing Z."/>
            <person name="Li L.-L."/>
            <person name="Kapur V."/>
            <person name="Alt D.P."/>
            <person name="Olsen S.C."/>
        </authorList>
    </citation>
    <scope>NUCLEOTIDE SEQUENCE [LARGE SCALE GENOMIC DNA]</scope>
    <source>
        <strain>9-941</strain>
    </source>
</reference>
<comment type="function">
    <text evidence="1">Transfers an acetyl group from acetyl-CoA to L-homoserine, forming acetyl-L-homoserine.</text>
</comment>
<comment type="catalytic activity">
    <reaction evidence="1">
        <text>L-homoserine + acetyl-CoA = O-acetyl-L-homoserine + CoA</text>
        <dbReference type="Rhea" id="RHEA:13701"/>
        <dbReference type="ChEBI" id="CHEBI:57287"/>
        <dbReference type="ChEBI" id="CHEBI:57288"/>
        <dbReference type="ChEBI" id="CHEBI:57476"/>
        <dbReference type="ChEBI" id="CHEBI:57716"/>
        <dbReference type="EC" id="2.3.1.31"/>
    </reaction>
</comment>
<comment type="pathway">
    <text evidence="1">Amino-acid biosynthesis; L-methionine biosynthesis via de novo pathway; O-acetyl-L-homoserine from L-homoserine: step 1/1.</text>
</comment>
<comment type="subcellular location">
    <subcellularLocation>
        <location evidence="1">Cytoplasm</location>
    </subcellularLocation>
</comment>
<comment type="similarity">
    <text evidence="1">Belongs to the MetA family.</text>
</comment>
<evidence type="ECO:0000255" key="1">
    <source>
        <dbReference type="HAMAP-Rule" id="MF_00295"/>
    </source>
</evidence>
<feature type="chain" id="PRO_1000021804" description="Homoserine O-acetyltransferase">
    <location>
        <begin position="1"/>
        <end position="306"/>
    </location>
</feature>
<feature type="active site" description="Acyl-thioester intermediate" evidence="1">
    <location>
        <position position="142"/>
    </location>
</feature>
<feature type="active site" description="Proton acceptor" evidence="1">
    <location>
        <position position="235"/>
    </location>
</feature>
<feature type="active site" evidence="1">
    <location>
        <position position="237"/>
    </location>
</feature>
<feature type="binding site" evidence="1">
    <location>
        <position position="163"/>
    </location>
    <ligand>
        <name>substrate</name>
    </ligand>
</feature>
<feature type="binding site" evidence="1">
    <location>
        <position position="192"/>
    </location>
    <ligand>
        <name>substrate</name>
    </ligand>
</feature>
<feature type="binding site" evidence="1">
    <location>
        <position position="249"/>
    </location>
    <ligand>
        <name>substrate</name>
    </ligand>
</feature>
<feature type="site" description="Important for acyl-CoA specificity" evidence="1">
    <location>
        <position position="111"/>
    </location>
</feature>
<feature type="site" description="Important for substrate specificity" evidence="1">
    <location>
        <position position="192"/>
    </location>
</feature>
<sequence>MPIKIPDDLPATSVLEAEGVMVMREADAVRQDIRPLRIGLLNLMPNKVTTETQIARLLGATPLQVELTLVRMTNHVARHTPADHMLSFYCPWEEVNDQRFDGFVITGAPVERLPFEEVTYWDEMRRVFDWTQSHVHRTLNICWAAQAAVYHFHGMKKYDLPAKASGVFRQRSLVPASPYLRGFSDDFAIPVSRWTEVRKSDIPADSGLKVLVDSTETGLCLLDDPRHRSLHMFNHVEYDTTSLADEYFRDIQVQPEAKVPVNYFPGDDAKRPPENRWRSHAHLLFGNWINEMYQSTPYDIERIGKV</sequence>
<protein>
    <recommendedName>
        <fullName evidence="1">Homoserine O-acetyltransferase</fullName>
        <shortName evidence="1">HAT</shortName>
        <ecNumber evidence="1">2.3.1.31</ecNumber>
    </recommendedName>
    <alternativeName>
        <fullName evidence="1">Homoserine transacetylase</fullName>
        <shortName evidence="1">HTA</shortName>
    </alternativeName>
</protein>
<keyword id="KW-0012">Acyltransferase</keyword>
<keyword id="KW-0028">Amino-acid biosynthesis</keyword>
<keyword id="KW-0963">Cytoplasm</keyword>
<keyword id="KW-0486">Methionine biosynthesis</keyword>
<keyword id="KW-0808">Transferase</keyword>
<proteinExistence type="inferred from homology"/>
<accession>Q577P3</accession>
<gene>
    <name evidence="1" type="primary">metAA</name>
    <name type="ordered locus">BruAb2_0737</name>
</gene>
<organism>
    <name type="scientific">Brucella abortus biovar 1 (strain 9-941)</name>
    <dbReference type="NCBI Taxonomy" id="262698"/>
    <lineage>
        <taxon>Bacteria</taxon>
        <taxon>Pseudomonadati</taxon>
        <taxon>Pseudomonadota</taxon>
        <taxon>Alphaproteobacteria</taxon>
        <taxon>Hyphomicrobiales</taxon>
        <taxon>Brucellaceae</taxon>
        <taxon>Brucella/Ochrobactrum group</taxon>
        <taxon>Brucella</taxon>
    </lineage>
</organism>
<dbReference type="EC" id="2.3.1.31" evidence="1"/>
<dbReference type="EMBL" id="AE017224">
    <property type="protein sequence ID" value="AAX76141.1"/>
    <property type="molecule type" value="Genomic_DNA"/>
</dbReference>
<dbReference type="SMR" id="Q577P3"/>
<dbReference type="EnsemblBacteria" id="AAX76141">
    <property type="protein sequence ID" value="AAX76141"/>
    <property type="gene ID" value="BruAb2_0737"/>
</dbReference>
<dbReference type="KEGG" id="bmb:BruAb2_0737"/>
<dbReference type="HOGENOM" id="CLU_057851_0_1_5"/>
<dbReference type="UniPathway" id="UPA00051">
    <property type="reaction ID" value="UER00074"/>
</dbReference>
<dbReference type="Proteomes" id="UP000000540">
    <property type="component" value="Chromosome II"/>
</dbReference>
<dbReference type="GO" id="GO:0005737">
    <property type="term" value="C:cytoplasm"/>
    <property type="evidence" value="ECO:0007669"/>
    <property type="project" value="UniProtKB-SubCell"/>
</dbReference>
<dbReference type="GO" id="GO:0004414">
    <property type="term" value="F:homoserine O-acetyltransferase activity"/>
    <property type="evidence" value="ECO:0007669"/>
    <property type="project" value="UniProtKB-EC"/>
</dbReference>
<dbReference type="GO" id="GO:0008899">
    <property type="term" value="F:homoserine O-succinyltransferase activity"/>
    <property type="evidence" value="ECO:0007669"/>
    <property type="project" value="UniProtKB-UniRule"/>
</dbReference>
<dbReference type="GO" id="GO:0019281">
    <property type="term" value="P:L-methionine biosynthetic process from homoserine via O-succinyl-L-homoserine and cystathionine"/>
    <property type="evidence" value="ECO:0007669"/>
    <property type="project" value="InterPro"/>
</dbReference>
<dbReference type="CDD" id="cd03131">
    <property type="entry name" value="GATase1_HTS"/>
    <property type="match status" value="1"/>
</dbReference>
<dbReference type="Gene3D" id="3.40.50.880">
    <property type="match status" value="1"/>
</dbReference>
<dbReference type="HAMAP" id="MF_00295">
    <property type="entry name" value="MetA_acyltransf"/>
    <property type="match status" value="1"/>
</dbReference>
<dbReference type="InterPro" id="IPR029062">
    <property type="entry name" value="Class_I_gatase-like"/>
</dbReference>
<dbReference type="InterPro" id="IPR005697">
    <property type="entry name" value="HST_MetA"/>
</dbReference>
<dbReference type="InterPro" id="IPR033752">
    <property type="entry name" value="MetA_family"/>
</dbReference>
<dbReference type="NCBIfam" id="TIGR01001">
    <property type="entry name" value="metA"/>
    <property type="match status" value="1"/>
</dbReference>
<dbReference type="PANTHER" id="PTHR20919">
    <property type="entry name" value="HOMOSERINE O-SUCCINYLTRANSFERASE"/>
    <property type="match status" value="1"/>
</dbReference>
<dbReference type="PANTHER" id="PTHR20919:SF0">
    <property type="entry name" value="HOMOSERINE O-SUCCINYLTRANSFERASE"/>
    <property type="match status" value="1"/>
</dbReference>
<dbReference type="Pfam" id="PF04204">
    <property type="entry name" value="HTS"/>
    <property type="match status" value="1"/>
</dbReference>
<dbReference type="PIRSF" id="PIRSF000450">
    <property type="entry name" value="H_ser_succinyltr"/>
    <property type="match status" value="1"/>
</dbReference>
<dbReference type="SUPFAM" id="SSF52317">
    <property type="entry name" value="Class I glutamine amidotransferase-like"/>
    <property type="match status" value="1"/>
</dbReference>
<name>METAA_BRUAB</name>